<gene>
    <name evidence="1" type="primary">rplU</name>
    <name type="ordered locus">CPS_4512</name>
</gene>
<accession>Q47VL2</accession>
<reference key="1">
    <citation type="journal article" date="2005" name="Proc. Natl. Acad. Sci. U.S.A.">
        <title>The psychrophilic lifestyle as revealed by the genome sequence of Colwellia psychrerythraea 34H through genomic and proteomic analyses.</title>
        <authorList>
            <person name="Methe B.A."/>
            <person name="Nelson K.E."/>
            <person name="Deming J.W."/>
            <person name="Momen B."/>
            <person name="Melamud E."/>
            <person name="Zhang X."/>
            <person name="Moult J."/>
            <person name="Madupu R."/>
            <person name="Nelson W.C."/>
            <person name="Dodson R.J."/>
            <person name="Brinkac L.M."/>
            <person name="Daugherty S.C."/>
            <person name="Durkin A.S."/>
            <person name="DeBoy R.T."/>
            <person name="Kolonay J.F."/>
            <person name="Sullivan S.A."/>
            <person name="Zhou L."/>
            <person name="Davidsen T.M."/>
            <person name="Wu M."/>
            <person name="Huston A.L."/>
            <person name="Lewis M."/>
            <person name="Weaver B."/>
            <person name="Weidman J.F."/>
            <person name="Khouri H."/>
            <person name="Utterback T.R."/>
            <person name="Feldblyum T.V."/>
            <person name="Fraser C.M."/>
        </authorList>
    </citation>
    <scope>NUCLEOTIDE SEQUENCE [LARGE SCALE GENOMIC DNA]</scope>
    <source>
        <strain>34H / ATCC BAA-681</strain>
    </source>
</reference>
<feature type="chain" id="PRO_0000270654" description="Large ribosomal subunit protein bL21">
    <location>
        <begin position="1"/>
        <end position="103"/>
    </location>
</feature>
<organism>
    <name type="scientific">Colwellia psychrerythraea (strain 34H / ATCC BAA-681)</name>
    <name type="common">Vibrio psychroerythus</name>
    <dbReference type="NCBI Taxonomy" id="167879"/>
    <lineage>
        <taxon>Bacteria</taxon>
        <taxon>Pseudomonadati</taxon>
        <taxon>Pseudomonadota</taxon>
        <taxon>Gammaproteobacteria</taxon>
        <taxon>Alteromonadales</taxon>
        <taxon>Colwelliaceae</taxon>
        <taxon>Colwellia</taxon>
    </lineage>
</organism>
<comment type="function">
    <text evidence="1">This protein binds to 23S rRNA in the presence of protein L20.</text>
</comment>
<comment type="subunit">
    <text evidence="1">Part of the 50S ribosomal subunit. Contacts protein L20.</text>
</comment>
<comment type="similarity">
    <text evidence="1">Belongs to the bacterial ribosomal protein bL21 family.</text>
</comment>
<proteinExistence type="inferred from homology"/>
<dbReference type="EMBL" id="CP000083">
    <property type="protein sequence ID" value="AAZ24057.1"/>
    <property type="molecule type" value="Genomic_DNA"/>
</dbReference>
<dbReference type="RefSeq" id="WP_011045241.1">
    <property type="nucleotide sequence ID" value="NC_003910.7"/>
</dbReference>
<dbReference type="SMR" id="Q47VL2"/>
<dbReference type="STRING" id="167879.CPS_4512"/>
<dbReference type="KEGG" id="cps:CPS_4512"/>
<dbReference type="eggNOG" id="COG0261">
    <property type="taxonomic scope" value="Bacteria"/>
</dbReference>
<dbReference type="HOGENOM" id="CLU_061463_3_3_6"/>
<dbReference type="Proteomes" id="UP000000547">
    <property type="component" value="Chromosome"/>
</dbReference>
<dbReference type="GO" id="GO:0005737">
    <property type="term" value="C:cytoplasm"/>
    <property type="evidence" value="ECO:0007669"/>
    <property type="project" value="UniProtKB-ARBA"/>
</dbReference>
<dbReference type="GO" id="GO:1990904">
    <property type="term" value="C:ribonucleoprotein complex"/>
    <property type="evidence" value="ECO:0007669"/>
    <property type="project" value="UniProtKB-KW"/>
</dbReference>
<dbReference type="GO" id="GO:0005840">
    <property type="term" value="C:ribosome"/>
    <property type="evidence" value="ECO:0007669"/>
    <property type="project" value="UniProtKB-KW"/>
</dbReference>
<dbReference type="GO" id="GO:0019843">
    <property type="term" value="F:rRNA binding"/>
    <property type="evidence" value="ECO:0007669"/>
    <property type="project" value="UniProtKB-UniRule"/>
</dbReference>
<dbReference type="GO" id="GO:0003735">
    <property type="term" value="F:structural constituent of ribosome"/>
    <property type="evidence" value="ECO:0007669"/>
    <property type="project" value="InterPro"/>
</dbReference>
<dbReference type="GO" id="GO:0006412">
    <property type="term" value="P:translation"/>
    <property type="evidence" value="ECO:0007669"/>
    <property type="project" value="UniProtKB-UniRule"/>
</dbReference>
<dbReference type="HAMAP" id="MF_01363">
    <property type="entry name" value="Ribosomal_bL21"/>
    <property type="match status" value="1"/>
</dbReference>
<dbReference type="InterPro" id="IPR028909">
    <property type="entry name" value="bL21-like"/>
</dbReference>
<dbReference type="InterPro" id="IPR036164">
    <property type="entry name" value="bL21-like_sf"/>
</dbReference>
<dbReference type="InterPro" id="IPR001787">
    <property type="entry name" value="Ribosomal_bL21"/>
</dbReference>
<dbReference type="InterPro" id="IPR018258">
    <property type="entry name" value="Ribosomal_bL21_CS"/>
</dbReference>
<dbReference type="NCBIfam" id="TIGR00061">
    <property type="entry name" value="L21"/>
    <property type="match status" value="1"/>
</dbReference>
<dbReference type="PANTHER" id="PTHR21349">
    <property type="entry name" value="50S RIBOSOMAL PROTEIN L21"/>
    <property type="match status" value="1"/>
</dbReference>
<dbReference type="PANTHER" id="PTHR21349:SF0">
    <property type="entry name" value="LARGE RIBOSOMAL SUBUNIT PROTEIN BL21M"/>
    <property type="match status" value="1"/>
</dbReference>
<dbReference type="Pfam" id="PF00829">
    <property type="entry name" value="Ribosomal_L21p"/>
    <property type="match status" value="1"/>
</dbReference>
<dbReference type="SUPFAM" id="SSF141091">
    <property type="entry name" value="L21p-like"/>
    <property type="match status" value="1"/>
</dbReference>
<dbReference type="PROSITE" id="PS01169">
    <property type="entry name" value="RIBOSOMAL_L21"/>
    <property type="match status" value="1"/>
</dbReference>
<keyword id="KW-0687">Ribonucleoprotein</keyword>
<keyword id="KW-0689">Ribosomal protein</keyword>
<keyword id="KW-0694">RNA-binding</keyword>
<keyword id="KW-0699">rRNA-binding</keyword>
<protein>
    <recommendedName>
        <fullName evidence="1">Large ribosomal subunit protein bL21</fullName>
    </recommendedName>
    <alternativeName>
        <fullName evidence="2">50S ribosomal protein L21</fullName>
    </alternativeName>
</protein>
<evidence type="ECO:0000255" key="1">
    <source>
        <dbReference type="HAMAP-Rule" id="MF_01363"/>
    </source>
</evidence>
<evidence type="ECO:0000305" key="2"/>
<sequence length="103" mass="11376">MYAVFQSGGKQHRVTEGQTVRLEKLELEVGATVEFDNVLMIANGDNINVGAPYVAGGKVVAEVVTQARAPKITIVKFKRRKHSRKQAGHRQWFTEVKITGING</sequence>
<name>RL21_COLP3</name>